<organism>
    <name type="scientific">Xylella fastidiosa (strain 9a5c)</name>
    <dbReference type="NCBI Taxonomy" id="160492"/>
    <lineage>
        <taxon>Bacteria</taxon>
        <taxon>Pseudomonadati</taxon>
        <taxon>Pseudomonadota</taxon>
        <taxon>Gammaproteobacteria</taxon>
        <taxon>Lysobacterales</taxon>
        <taxon>Lysobacteraceae</taxon>
        <taxon>Xylella</taxon>
    </lineage>
</organism>
<evidence type="ECO:0000255" key="1">
    <source>
        <dbReference type="HAMAP-Rule" id="MF_00074"/>
    </source>
</evidence>
<evidence type="ECO:0000305" key="2"/>
<sequence length="212" mass="23406">MNDSSLSPEVTADLEYGLDILELDRVYVVPLLAYLTLLIRWNRTYNLTAIRDPREMVVRHLLDSLAIQRYVTVGRLADLGSGPGLPGIPLAISCPSLQVTLVESNGKKARFLREVVRQLGLSNVGVSEVRAEALDEALTYEHLTARALDTLNGIVTVGGHLLKSEGTLLAMKGAYPHEEIAMLPPHWVVEAVHPLQVPKLTGKRHLVIVRKR</sequence>
<name>RSMG_XYLFA</name>
<dbReference type="EC" id="2.1.1.170" evidence="1"/>
<dbReference type="EMBL" id="AE003849">
    <property type="protein sequence ID" value="AAF84737.1"/>
    <property type="status" value="ALT_INIT"/>
    <property type="molecule type" value="Genomic_DNA"/>
</dbReference>
<dbReference type="PIR" id="D82619">
    <property type="entry name" value="D82619"/>
</dbReference>
<dbReference type="RefSeq" id="WP_010894397.1">
    <property type="nucleotide sequence ID" value="NC_002488.3"/>
</dbReference>
<dbReference type="SMR" id="Q9PC50"/>
<dbReference type="STRING" id="160492.XF_1935"/>
<dbReference type="KEGG" id="xfa:XF_1935"/>
<dbReference type="eggNOG" id="COG0357">
    <property type="taxonomic scope" value="Bacteria"/>
</dbReference>
<dbReference type="HOGENOM" id="CLU_065341_2_0_6"/>
<dbReference type="Proteomes" id="UP000000812">
    <property type="component" value="Chromosome"/>
</dbReference>
<dbReference type="GO" id="GO:0005829">
    <property type="term" value="C:cytosol"/>
    <property type="evidence" value="ECO:0007669"/>
    <property type="project" value="TreeGrafter"/>
</dbReference>
<dbReference type="GO" id="GO:0070043">
    <property type="term" value="F:rRNA (guanine-N7-)-methyltransferase activity"/>
    <property type="evidence" value="ECO:0007669"/>
    <property type="project" value="UniProtKB-UniRule"/>
</dbReference>
<dbReference type="Gene3D" id="3.40.50.150">
    <property type="entry name" value="Vaccinia Virus protein VP39"/>
    <property type="match status" value="1"/>
</dbReference>
<dbReference type="HAMAP" id="MF_00074">
    <property type="entry name" value="16SrRNA_methyltr_G"/>
    <property type="match status" value="1"/>
</dbReference>
<dbReference type="InterPro" id="IPR003682">
    <property type="entry name" value="rRNA_ssu_MeTfrase_G"/>
</dbReference>
<dbReference type="InterPro" id="IPR029063">
    <property type="entry name" value="SAM-dependent_MTases_sf"/>
</dbReference>
<dbReference type="NCBIfam" id="TIGR00138">
    <property type="entry name" value="rsmG_gidB"/>
    <property type="match status" value="1"/>
</dbReference>
<dbReference type="PANTHER" id="PTHR31760">
    <property type="entry name" value="S-ADENOSYL-L-METHIONINE-DEPENDENT METHYLTRANSFERASES SUPERFAMILY PROTEIN"/>
    <property type="match status" value="1"/>
</dbReference>
<dbReference type="PANTHER" id="PTHR31760:SF0">
    <property type="entry name" value="S-ADENOSYL-L-METHIONINE-DEPENDENT METHYLTRANSFERASES SUPERFAMILY PROTEIN"/>
    <property type="match status" value="1"/>
</dbReference>
<dbReference type="Pfam" id="PF02527">
    <property type="entry name" value="GidB"/>
    <property type="match status" value="1"/>
</dbReference>
<dbReference type="PIRSF" id="PIRSF003078">
    <property type="entry name" value="GidB"/>
    <property type="match status" value="1"/>
</dbReference>
<dbReference type="SUPFAM" id="SSF53335">
    <property type="entry name" value="S-adenosyl-L-methionine-dependent methyltransferases"/>
    <property type="match status" value="1"/>
</dbReference>
<comment type="function">
    <text evidence="1">Specifically methylates the N7 position of guanine in position 527 of 16S rRNA.</text>
</comment>
<comment type="catalytic activity">
    <reaction evidence="1">
        <text>guanosine(527) in 16S rRNA + S-adenosyl-L-methionine = N(7)-methylguanosine(527) in 16S rRNA + S-adenosyl-L-homocysteine</text>
        <dbReference type="Rhea" id="RHEA:42732"/>
        <dbReference type="Rhea" id="RHEA-COMP:10209"/>
        <dbReference type="Rhea" id="RHEA-COMP:10210"/>
        <dbReference type="ChEBI" id="CHEBI:57856"/>
        <dbReference type="ChEBI" id="CHEBI:59789"/>
        <dbReference type="ChEBI" id="CHEBI:74269"/>
        <dbReference type="ChEBI" id="CHEBI:74480"/>
        <dbReference type="EC" id="2.1.1.170"/>
    </reaction>
</comment>
<comment type="subcellular location">
    <subcellularLocation>
        <location evidence="1">Cytoplasm</location>
    </subcellularLocation>
</comment>
<comment type="similarity">
    <text evidence="1">Belongs to the methyltransferase superfamily. RNA methyltransferase RsmG family.</text>
</comment>
<comment type="sequence caution" evidence="2">
    <conflict type="erroneous initiation">
        <sequence resource="EMBL-CDS" id="AAF84737"/>
    </conflict>
</comment>
<reference key="1">
    <citation type="journal article" date="2000" name="Nature">
        <title>The genome sequence of the plant pathogen Xylella fastidiosa.</title>
        <authorList>
            <person name="Simpson A.J.G."/>
            <person name="Reinach F.C."/>
            <person name="Arruda P."/>
            <person name="Abreu F.A."/>
            <person name="Acencio M."/>
            <person name="Alvarenga R."/>
            <person name="Alves L.M.C."/>
            <person name="Araya J.E."/>
            <person name="Baia G.S."/>
            <person name="Baptista C.S."/>
            <person name="Barros M.H."/>
            <person name="Bonaccorsi E.D."/>
            <person name="Bordin S."/>
            <person name="Bove J.M."/>
            <person name="Briones M.R.S."/>
            <person name="Bueno M.R.P."/>
            <person name="Camargo A.A."/>
            <person name="Camargo L.E.A."/>
            <person name="Carraro D.M."/>
            <person name="Carrer H."/>
            <person name="Colauto N.B."/>
            <person name="Colombo C."/>
            <person name="Costa F.F."/>
            <person name="Costa M.C.R."/>
            <person name="Costa-Neto C.M."/>
            <person name="Coutinho L.L."/>
            <person name="Cristofani M."/>
            <person name="Dias-Neto E."/>
            <person name="Docena C."/>
            <person name="El-Dorry H."/>
            <person name="Facincani A.P."/>
            <person name="Ferreira A.J.S."/>
            <person name="Ferreira V.C.A."/>
            <person name="Ferro J.A."/>
            <person name="Fraga J.S."/>
            <person name="Franca S.C."/>
            <person name="Franco M.C."/>
            <person name="Frohme M."/>
            <person name="Furlan L.R."/>
            <person name="Garnier M."/>
            <person name="Goldman G.H."/>
            <person name="Goldman M.H.S."/>
            <person name="Gomes S.L."/>
            <person name="Gruber A."/>
            <person name="Ho P.L."/>
            <person name="Hoheisel J.D."/>
            <person name="Junqueira M.L."/>
            <person name="Kemper E.L."/>
            <person name="Kitajima J.P."/>
            <person name="Krieger J.E."/>
            <person name="Kuramae E.E."/>
            <person name="Laigret F."/>
            <person name="Lambais M.R."/>
            <person name="Leite L.C.C."/>
            <person name="Lemos E.G.M."/>
            <person name="Lemos M.V.F."/>
            <person name="Lopes S.A."/>
            <person name="Lopes C.R."/>
            <person name="Machado J.A."/>
            <person name="Machado M.A."/>
            <person name="Madeira A.M.B.N."/>
            <person name="Madeira H.M.F."/>
            <person name="Marino C.L."/>
            <person name="Marques M.V."/>
            <person name="Martins E.A.L."/>
            <person name="Martins E.M.F."/>
            <person name="Matsukuma A.Y."/>
            <person name="Menck C.F.M."/>
            <person name="Miracca E.C."/>
            <person name="Miyaki C.Y."/>
            <person name="Monteiro-Vitorello C.B."/>
            <person name="Moon D.H."/>
            <person name="Nagai M.A."/>
            <person name="Nascimento A.L.T.O."/>
            <person name="Netto L.E.S."/>
            <person name="Nhani A. Jr."/>
            <person name="Nobrega F.G."/>
            <person name="Nunes L.R."/>
            <person name="Oliveira M.A."/>
            <person name="de Oliveira M.C."/>
            <person name="de Oliveira R.C."/>
            <person name="Palmieri D.A."/>
            <person name="Paris A."/>
            <person name="Peixoto B.R."/>
            <person name="Pereira G.A.G."/>
            <person name="Pereira H.A. Jr."/>
            <person name="Pesquero J.B."/>
            <person name="Quaggio R.B."/>
            <person name="Roberto P.G."/>
            <person name="Rodrigues V."/>
            <person name="de Rosa A.J.M."/>
            <person name="de Rosa V.E. Jr."/>
            <person name="de Sa R.G."/>
            <person name="Santelli R.V."/>
            <person name="Sawasaki H.E."/>
            <person name="da Silva A.C.R."/>
            <person name="da Silva A.M."/>
            <person name="da Silva F.R."/>
            <person name="Silva W.A. Jr."/>
            <person name="da Silveira J.F."/>
            <person name="Silvestri M.L.Z."/>
            <person name="Siqueira W.J."/>
            <person name="de Souza A.A."/>
            <person name="de Souza A.P."/>
            <person name="Terenzi M.F."/>
            <person name="Truffi D."/>
            <person name="Tsai S.M."/>
            <person name="Tsuhako M.H."/>
            <person name="Vallada H."/>
            <person name="Van Sluys M.A."/>
            <person name="Verjovski-Almeida S."/>
            <person name="Vettore A.L."/>
            <person name="Zago M.A."/>
            <person name="Zatz M."/>
            <person name="Meidanis J."/>
            <person name="Setubal J.C."/>
        </authorList>
    </citation>
    <scope>NUCLEOTIDE SEQUENCE [LARGE SCALE GENOMIC DNA]</scope>
    <source>
        <strain>9a5c</strain>
    </source>
</reference>
<accession>Q9PC50</accession>
<feature type="chain" id="PRO_0000184371" description="Ribosomal RNA small subunit methyltransferase G">
    <location>
        <begin position="1"/>
        <end position="212"/>
    </location>
</feature>
<feature type="binding site" evidence="1">
    <location>
        <position position="80"/>
    </location>
    <ligand>
        <name>S-adenosyl-L-methionine</name>
        <dbReference type="ChEBI" id="CHEBI:59789"/>
    </ligand>
</feature>
<feature type="binding site" evidence="1">
    <location>
        <position position="85"/>
    </location>
    <ligand>
        <name>S-adenosyl-L-methionine</name>
        <dbReference type="ChEBI" id="CHEBI:59789"/>
    </ligand>
</feature>
<feature type="binding site" evidence="1">
    <location>
        <begin position="131"/>
        <end position="132"/>
    </location>
    <ligand>
        <name>S-adenosyl-L-methionine</name>
        <dbReference type="ChEBI" id="CHEBI:59789"/>
    </ligand>
</feature>
<feature type="binding site" evidence="1">
    <location>
        <position position="146"/>
    </location>
    <ligand>
        <name>S-adenosyl-L-methionine</name>
        <dbReference type="ChEBI" id="CHEBI:59789"/>
    </ligand>
</feature>
<gene>
    <name evidence="1" type="primary">rsmG</name>
    <name type="ordered locus">XF_1935</name>
</gene>
<proteinExistence type="inferred from homology"/>
<protein>
    <recommendedName>
        <fullName evidence="1">Ribosomal RNA small subunit methyltransferase G</fullName>
        <ecNumber evidence="1">2.1.1.170</ecNumber>
    </recommendedName>
    <alternativeName>
        <fullName evidence="1">16S rRNA 7-methylguanosine methyltransferase</fullName>
        <shortName evidence="1">16S rRNA m7G methyltransferase</shortName>
    </alternativeName>
</protein>
<keyword id="KW-0963">Cytoplasm</keyword>
<keyword id="KW-0489">Methyltransferase</keyword>
<keyword id="KW-0698">rRNA processing</keyword>
<keyword id="KW-0949">S-adenosyl-L-methionine</keyword>
<keyword id="KW-0808">Transferase</keyword>